<reference key="1">
    <citation type="journal article" date="2008" name="PLoS Genet.">
        <title>Genomic islands in the pathogenic filamentous fungus Aspergillus fumigatus.</title>
        <authorList>
            <person name="Fedorova N.D."/>
            <person name="Khaldi N."/>
            <person name="Joardar V.S."/>
            <person name="Maiti R."/>
            <person name="Amedeo P."/>
            <person name="Anderson M.J."/>
            <person name="Crabtree J."/>
            <person name="Silva J.C."/>
            <person name="Badger J.H."/>
            <person name="Albarraq A."/>
            <person name="Angiuoli S."/>
            <person name="Bussey H."/>
            <person name="Bowyer P."/>
            <person name="Cotty P.J."/>
            <person name="Dyer P.S."/>
            <person name="Egan A."/>
            <person name="Galens K."/>
            <person name="Fraser-Liggett C.M."/>
            <person name="Haas B.J."/>
            <person name="Inman J.M."/>
            <person name="Kent R."/>
            <person name="Lemieux S."/>
            <person name="Malavazi I."/>
            <person name="Orvis J."/>
            <person name="Roemer T."/>
            <person name="Ronning C.M."/>
            <person name="Sundaram J.P."/>
            <person name="Sutton G."/>
            <person name="Turner G."/>
            <person name="Venter J.C."/>
            <person name="White O.R."/>
            <person name="Whitty B.R."/>
            <person name="Youngman P."/>
            <person name="Wolfe K.H."/>
            <person name="Goldman G.H."/>
            <person name="Wortman J.R."/>
            <person name="Jiang B."/>
            <person name="Denning D.W."/>
            <person name="Nierman W.C."/>
        </authorList>
    </citation>
    <scope>NUCLEOTIDE SEQUENCE [LARGE SCALE GENOMIC DNA]</scope>
    <source>
        <strain>ATCC 1007 / CBS 513.65 / DSM 816 / NCTC 3887 / NRRL 1 / QM 1276 / 107</strain>
    </source>
</reference>
<sequence length="115" mass="12994">MASQTAVAARGAYRQILRATRVAFQNDFRVLIAARQEARQQFDKHRREGIDTPMQINHAKEVADILRHNIVQGVRDGSDEASKWELRIHDDIERGDNDSIKIGGKNVKIEKACSA</sequence>
<accession>A1C9A5</accession>
<organism>
    <name type="scientific">Aspergillus clavatus (strain ATCC 1007 / CBS 513.65 / DSM 816 / NCTC 3887 / NRRL 1 / QM 1276 / 107)</name>
    <dbReference type="NCBI Taxonomy" id="344612"/>
    <lineage>
        <taxon>Eukaryota</taxon>
        <taxon>Fungi</taxon>
        <taxon>Dikarya</taxon>
        <taxon>Ascomycota</taxon>
        <taxon>Pezizomycotina</taxon>
        <taxon>Eurotiomycetes</taxon>
        <taxon>Eurotiomycetidae</taxon>
        <taxon>Eurotiales</taxon>
        <taxon>Aspergillaceae</taxon>
        <taxon>Aspergillus</taxon>
        <taxon>Aspergillus subgen. Fumigati</taxon>
    </lineage>
</organism>
<comment type="function">
    <text evidence="1">Assembly factor required for Rieske Fe-S protein RIP1 incorporation into the cytochrome b-c1 (CIII) complex. Functions as a chaperone, binding to this subunit within the mitochondrial matrix and stabilizing it prior to its translocation and insertion into the late CIII dimeric intermediate within the mitochondrial inner membrane. Modulates the mitochondrial matrix zinc pool (By similarity).</text>
</comment>
<comment type="subunit">
    <text evidence="1">Interacts with RIP1.</text>
</comment>
<comment type="subcellular location">
    <subcellularLocation>
        <location evidence="1">Mitochondrion matrix</location>
    </subcellularLocation>
</comment>
<comment type="similarity">
    <text evidence="3">Belongs to the complex I LYR family. MZM1 subfamily.</text>
</comment>
<feature type="transit peptide" description="Mitochondrion" evidence="2">
    <location>
        <begin position="1"/>
        <end position="36"/>
    </location>
</feature>
<feature type="chain" id="PRO_0000405480" description="Mitochondrial zinc maintenance protein 1, mitochondrial">
    <location>
        <begin position="37"/>
        <end position="115"/>
    </location>
</feature>
<protein>
    <recommendedName>
        <fullName>Mitochondrial zinc maintenance protein 1, mitochondrial</fullName>
    </recommendedName>
</protein>
<name>MZM1_ASPCL</name>
<gene>
    <name type="primary">MZM1</name>
    <name type="ORF">ACLA_054760</name>
</gene>
<evidence type="ECO:0000250" key="1"/>
<evidence type="ECO:0000255" key="2"/>
<evidence type="ECO:0000305" key="3"/>
<keyword id="KW-0143">Chaperone</keyword>
<keyword id="KW-0496">Mitochondrion</keyword>
<keyword id="KW-1185">Reference proteome</keyword>
<keyword id="KW-0809">Transit peptide</keyword>
<dbReference type="EMBL" id="DS027048">
    <property type="protein sequence ID" value="EAW13429.1"/>
    <property type="molecule type" value="Genomic_DNA"/>
</dbReference>
<dbReference type="RefSeq" id="XP_001274855.1">
    <property type="nucleotide sequence ID" value="XM_001274854.1"/>
</dbReference>
<dbReference type="SMR" id="A1C9A5"/>
<dbReference type="STRING" id="344612.A1C9A5"/>
<dbReference type="EnsemblFungi" id="EAW13429">
    <property type="protein sequence ID" value="EAW13429"/>
    <property type="gene ID" value="ACLA_054760"/>
</dbReference>
<dbReference type="GeneID" id="4706999"/>
<dbReference type="KEGG" id="act:ACLA_054760"/>
<dbReference type="VEuPathDB" id="FungiDB:ACLA_054760"/>
<dbReference type="eggNOG" id="ENOG502S6EF">
    <property type="taxonomic scope" value="Eukaryota"/>
</dbReference>
<dbReference type="HOGENOM" id="CLU_147114_2_0_1"/>
<dbReference type="OMA" id="KYKLRIH"/>
<dbReference type="OrthoDB" id="529194at2759"/>
<dbReference type="Proteomes" id="UP000006701">
    <property type="component" value="Unassembled WGS sequence"/>
</dbReference>
<dbReference type="GO" id="GO:0005759">
    <property type="term" value="C:mitochondrial matrix"/>
    <property type="evidence" value="ECO:0007669"/>
    <property type="project" value="UniProtKB-SubCell"/>
</dbReference>
<dbReference type="GO" id="GO:0044183">
    <property type="term" value="F:protein folding chaperone"/>
    <property type="evidence" value="ECO:0007669"/>
    <property type="project" value="TreeGrafter"/>
</dbReference>
<dbReference type="GO" id="GO:0034551">
    <property type="term" value="P:mitochondrial respiratory chain complex III assembly"/>
    <property type="evidence" value="ECO:0007669"/>
    <property type="project" value="InterPro"/>
</dbReference>
<dbReference type="CDD" id="cd20267">
    <property type="entry name" value="Complex1_LYR_LYRM7"/>
    <property type="match status" value="1"/>
</dbReference>
<dbReference type="InterPro" id="IPR008011">
    <property type="entry name" value="Complex1_LYR_dom"/>
</dbReference>
<dbReference type="InterPro" id="IPR045298">
    <property type="entry name" value="Complex1_LYR_LYRM7"/>
</dbReference>
<dbReference type="InterPro" id="IPR050435">
    <property type="entry name" value="MZM1/LYRM7"/>
</dbReference>
<dbReference type="PANTHER" id="PTHR46749">
    <property type="entry name" value="COMPLEX III ASSEMBLY FACTOR LYRM7"/>
    <property type="match status" value="1"/>
</dbReference>
<dbReference type="PANTHER" id="PTHR46749:SF1">
    <property type="entry name" value="COMPLEX III ASSEMBLY FACTOR LYRM7"/>
    <property type="match status" value="1"/>
</dbReference>
<dbReference type="Pfam" id="PF05347">
    <property type="entry name" value="Complex1_LYR"/>
    <property type="match status" value="1"/>
</dbReference>
<proteinExistence type="inferred from homology"/>